<dbReference type="EMBL" id="AE017332">
    <property type="protein sequence ID" value="AAV27456.1"/>
    <property type="molecule type" value="Genomic_DNA"/>
</dbReference>
<dbReference type="RefSeq" id="WP_011206037.1">
    <property type="nucleotide sequence ID" value="NC_006360.1"/>
</dbReference>
<dbReference type="SMR" id="Q601K2"/>
<dbReference type="GeneID" id="41334481"/>
<dbReference type="KEGG" id="mhy:mhp200"/>
<dbReference type="eggNOG" id="COG0094">
    <property type="taxonomic scope" value="Bacteria"/>
</dbReference>
<dbReference type="HOGENOM" id="CLU_061015_2_1_14"/>
<dbReference type="PhylomeDB" id="Q601K2"/>
<dbReference type="Proteomes" id="UP000006822">
    <property type="component" value="Chromosome"/>
</dbReference>
<dbReference type="GO" id="GO:1990904">
    <property type="term" value="C:ribonucleoprotein complex"/>
    <property type="evidence" value="ECO:0007669"/>
    <property type="project" value="UniProtKB-KW"/>
</dbReference>
<dbReference type="GO" id="GO:0005840">
    <property type="term" value="C:ribosome"/>
    <property type="evidence" value="ECO:0007669"/>
    <property type="project" value="UniProtKB-KW"/>
</dbReference>
<dbReference type="GO" id="GO:0019843">
    <property type="term" value="F:rRNA binding"/>
    <property type="evidence" value="ECO:0007669"/>
    <property type="project" value="UniProtKB-UniRule"/>
</dbReference>
<dbReference type="GO" id="GO:0003735">
    <property type="term" value="F:structural constituent of ribosome"/>
    <property type="evidence" value="ECO:0007669"/>
    <property type="project" value="InterPro"/>
</dbReference>
<dbReference type="GO" id="GO:0000049">
    <property type="term" value="F:tRNA binding"/>
    <property type="evidence" value="ECO:0007669"/>
    <property type="project" value="UniProtKB-UniRule"/>
</dbReference>
<dbReference type="GO" id="GO:0006412">
    <property type="term" value="P:translation"/>
    <property type="evidence" value="ECO:0007669"/>
    <property type="project" value="UniProtKB-UniRule"/>
</dbReference>
<dbReference type="FunFam" id="3.30.1440.10:FF:000001">
    <property type="entry name" value="50S ribosomal protein L5"/>
    <property type="match status" value="1"/>
</dbReference>
<dbReference type="Gene3D" id="3.30.1440.10">
    <property type="match status" value="1"/>
</dbReference>
<dbReference type="HAMAP" id="MF_01333_B">
    <property type="entry name" value="Ribosomal_uL5_B"/>
    <property type="match status" value="1"/>
</dbReference>
<dbReference type="InterPro" id="IPR002132">
    <property type="entry name" value="Ribosomal_uL5"/>
</dbReference>
<dbReference type="InterPro" id="IPR020930">
    <property type="entry name" value="Ribosomal_uL5_bac-type"/>
</dbReference>
<dbReference type="InterPro" id="IPR031309">
    <property type="entry name" value="Ribosomal_uL5_C"/>
</dbReference>
<dbReference type="InterPro" id="IPR022803">
    <property type="entry name" value="Ribosomal_uL5_dom_sf"/>
</dbReference>
<dbReference type="InterPro" id="IPR031310">
    <property type="entry name" value="Ribosomal_uL5_N"/>
</dbReference>
<dbReference type="NCBIfam" id="NF000585">
    <property type="entry name" value="PRK00010.1"/>
    <property type="match status" value="1"/>
</dbReference>
<dbReference type="PANTHER" id="PTHR11994">
    <property type="entry name" value="60S RIBOSOMAL PROTEIN L11-RELATED"/>
    <property type="match status" value="1"/>
</dbReference>
<dbReference type="Pfam" id="PF00281">
    <property type="entry name" value="Ribosomal_L5"/>
    <property type="match status" value="1"/>
</dbReference>
<dbReference type="Pfam" id="PF00673">
    <property type="entry name" value="Ribosomal_L5_C"/>
    <property type="match status" value="1"/>
</dbReference>
<dbReference type="PIRSF" id="PIRSF002161">
    <property type="entry name" value="Ribosomal_L5"/>
    <property type="match status" value="1"/>
</dbReference>
<dbReference type="SUPFAM" id="SSF55282">
    <property type="entry name" value="RL5-like"/>
    <property type="match status" value="1"/>
</dbReference>
<gene>
    <name evidence="1" type="primary">rplE</name>
    <name type="ordered locus">mhp200</name>
</gene>
<organism>
    <name type="scientific">Mesomycoplasma hyopneumoniae (strain 232)</name>
    <name type="common">Mycoplasma hyopneumoniae</name>
    <dbReference type="NCBI Taxonomy" id="295358"/>
    <lineage>
        <taxon>Bacteria</taxon>
        <taxon>Bacillati</taxon>
        <taxon>Mycoplasmatota</taxon>
        <taxon>Mycoplasmoidales</taxon>
        <taxon>Metamycoplasmataceae</taxon>
        <taxon>Mesomycoplasma</taxon>
    </lineage>
</organism>
<proteinExistence type="inferred from homology"/>
<keyword id="KW-0687">Ribonucleoprotein</keyword>
<keyword id="KW-0689">Ribosomal protein</keyword>
<keyword id="KW-0694">RNA-binding</keyword>
<keyword id="KW-0699">rRNA-binding</keyword>
<keyword id="KW-0820">tRNA-binding</keyword>
<evidence type="ECO:0000255" key="1">
    <source>
        <dbReference type="HAMAP-Rule" id="MF_01333"/>
    </source>
</evidence>
<evidence type="ECO:0000305" key="2"/>
<protein>
    <recommendedName>
        <fullName evidence="1">Large ribosomal subunit protein uL5</fullName>
    </recommendedName>
    <alternativeName>
        <fullName evidence="2">50S ribosomal protein L5</fullName>
    </alternativeName>
</protein>
<accession>Q601K2</accession>
<name>RL5_MESH2</name>
<sequence length="181" mass="20345">MIELEKHYYEKVFGQLKAHFNFKSPSQVPKITKVVVNMTAGNQSSNAKAIEAVLEDLAKITGQKAYKTVAKKSLATWKLRQGMPMGGKVTLRRQQMWNFLAKVLHIAIPRVRDFRGLSPKSFDGNGNFALGFKESIVFPEITFDKISKIRGLDVIIVTSAKNDQEGFKLLELLGFPFAKKV</sequence>
<comment type="function">
    <text evidence="1">This is one of the proteins that bind and probably mediate the attachment of the 5S RNA into the large ribosomal subunit, where it forms part of the central protuberance. In the 70S ribosome it contacts protein S13 of the 30S subunit (bridge B1b), connecting the 2 subunits; this bridge is implicated in subunit movement. Contacts the P site tRNA; the 5S rRNA and some of its associated proteins might help stabilize positioning of ribosome-bound tRNAs.</text>
</comment>
<comment type="subunit">
    <text evidence="1">Part of the 50S ribosomal subunit; part of the 5S rRNA/L5/L18/L25 subcomplex. Contacts the 5S rRNA and the P site tRNA. Forms a bridge to the 30S subunit in the 70S ribosome.</text>
</comment>
<comment type="similarity">
    <text evidence="1">Belongs to the universal ribosomal protein uL5 family.</text>
</comment>
<reference key="1">
    <citation type="journal article" date="2004" name="J. Bacteriol.">
        <title>The genome sequence of Mycoplasma hyopneumoniae strain 232, the agent of swine mycoplasmosis.</title>
        <authorList>
            <person name="Minion F.C."/>
            <person name="Lefkowitz E.J."/>
            <person name="Madsen M.L."/>
            <person name="Cleary B.J."/>
            <person name="Swartzell S.M."/>
            <person name="Mahairas G.G."/>
        </authorList>
    </citation>
    <scope>NUCLEOTIDE SEQUENCE [LARGE SCALE GENOMIC DNA]</scope>
    <source>
        <strain>232</strain>
    </source>
</reference>
<feature type="chain" id="PRO_0000243022" description="Large ribosomal subunit protein uL5">
    <location>
        <begin position="1"/>
        <end position="181"/>
    </location>
</feature>